<sequence length="166" mass="19219">MTNTLDDSIGSMQNCVSIVRDTSLKLRSRAQTPEETERIKKVLQLTRKYEEVTQSEVLAAQQRQAAEIAPQVQDLIGGVEKQISSLHSKERKLKSQSELNKSRLEQFPMTRREVVDVPRDADNVVEVTEEELQELEELQREREKLKMEISRLNLEKRKSVYGKLPQ</sequence>
<reference key="1">
    <citation type="journal article" date="2004" name="Nature">
        <title>Genome evolution in yeasts.</title>
        <authorList>
            <person name="Dujon B."/>
            <person name="Sherman D."/>
            <person name="Fischer G."/>
            <person name="Durrens P."/>
            <person name="Casaregola S."/>
            <person name="Lafontaine I."/>
            <person name="de Montigny J."/>
            <person name="Marck C."/>
            <person name="Neuveglise C."/>
            <person name="Talla E."/>
            <person name="Goffard N."/>
            <person name="Frangeul L."/>
            <person name="Aigle M."/>
            <person name="Anthouard V."/>
            <person name="Babour A."/>
            <person name="Barbe V."/>
            <person name="Barnay S."/>
            <person name="Blanchin S."/>
            <person name="Beckerich J.-M."/>
            <person name="Beyne E."/>
            <person name="Bleykasten C."/>
            <person name="Boisrame A."/>
            <person name="Boyer J."/>
            <person name="Cattolico L."/>
            <person name="Confanioleri F."/>
            <person name="de Daruvar A."/>
            <person name="Despons L."/>
            <person name="Fabre E."/>
            <person name="Fairhead C."/>
            <person name="Ferry-Dumazet H."/>
            <person name="Groppi A."/>
            <person name="Hantraye F."/>
            <person name="Hennequin C."/>
            <person name="Jauniaux N."/>
            <person name="Joyet P."/>
            <person name="Kachouri R."/>
            <person name="Kerrest A."/>
            <person name="Koszul R."/>
            <person name="Lemaire M."/>
            <person name="Lesur I."/>
            <person name="Ma L."/>
            <person name="Muller H."/>
            <person name="Nicaud J.-M."/>
            <person name="Nikolski M."/>
            <person name="Oztas S."/>
            <person name="Ozier-Kalogeropoulos O."/>
            <person name="Pellenz S."/>
            <person name="Potier S."/>
            <person name="Richard G.-F."/>
            <person name="Straub M.-L."/>
            <person name="Suleau A."/>
            <person name="Swennen D."/>
            <person name="Tekaia F."/>
            <person name="Wesolowski-Louvel M."/>
            <person name="Westhof E."/>
            <person name="Wirth B."/>
            <person name="Zeniou-Meyer M."/>
            <person name="Zivanovic Y."/>
            <person name="Bolotin-Fukuhara M."/>
            <person name="Thierry A."/>
            <person name="Bouchier C."/>
            <person name="Caudron B."/>
            <person name="Scarpelli C."/>
            <person name="Gaillardin C."/>
            <person name="Weissenbach J."/>
            <person name="Wincker P."/>
            <person name="Souciet J.-L."/>
        </authorList>
    </citation>
    <scope>NUCLEOTIDE SEQUENCE [LARGE SCALE GENOMIC DNA]</scope>
    <source>
        <strain>CLIB 122 / E 150</strain>
    </source>
</reference>
<feature type="chain" id="PRO_0000142592" description="DASH complex subunit SPC19">
    <location>
        <begin position="1"/>
        <end position="166"/>
    </location>
</feature>
<feature type="coiled-coil region" evidence="3">
    <location>
        <begin position="119"/>
        <end position="160"/>
    </location>
</feature>
<accession>Q6C070</accession>
<evidence type="ECO:0000250" key="1">
    <source>
        <dbReference type="UniProtKB" id="Q03954"/>
    </source>
</evidence>
<evidence type="ECO:0000250" key="2">
    <source>
        <dbReference type="UniProtKB" id="Q50HP3"/>
    </source>
</evidence>
<evidence type="ECO:0000255" key="3"/>
<evidence type="ECO:0000305" key="4"/>
<dbReference type="EMBL" id="CR382132">
    <property type="protein sequence ID" value="CAG78754.2"/>
    <property type="molecule type" value="Genomic_DNA"/>
</dbReference>
<dbReference type="RefSeq" id="XP_505942.2">
    <property type="nucleotide sequence ID" value="XM_505942.2"/>
</dbReference>
<dbReference type="SMR" id="Q6C070"/>
<dbReference type="FunCoup" id="Q6C070">
    <property type="interactions" value="27"/>
</dbReference>
<dbReference type="STRING" id="284591.Q6C070"/>
<dbReference type="EnsemblFungi" id="CAG78754">
    <property type="protein sequence ID" value="CAG78754"/>
    <property type="gene ID" value="YALI0_F27335g"/>
</dbReference>
<dbReference type="KEGG" id="yli:2907882"/>
<dbReference type="VEuPathDB" id="FungiDB:YALI0_F27335g"/>
<dbReference type="HOGENOM" id="CLU_1604034_0_0_1"/>
<dbReference type="InParanoid" id="Q6C070"/>
<dbReference type="OrthoDB" id="118074at4891"/>
<dbReference type="Proteomes" id="UP000001300">
    <property type="component" value="Chromosome F"/>
</dbReference>
<dbReference type="GO" id="GO:0005737">
    <property type="term" value="C:cytoplasm"/>
    <property type="evidence" value="ECO:0007669"/>
    <property type="project" value="UniProtKB-KW"/>
</dbReference>
<dbReference type="GO" id="GO:0042729">
    <property type="term" value="C:DASH complex"/>
    <property type="evidence" value="ECO:0000250"/>
    <property type="project" value="UniProtKB"/>
</dbReference>
<dbReference type="GO" id="GO:0005876">
    <property type="term" value="C:spindle microtubule"/>
    <property type="evidence" value="ECO:0007669"/>
    <property type="project" value="InterPro"/>
</dbReference>
<dbReference type="GO" id="GO:0008608">
    <property type="term" value="P:attachment of spindle microtubules to kinetochore"/>
    <property type="evidence" value="ECO:0000250"/>
    <property type="project" value="UniProtKB"/>
</dbReference>
<dbReference type="GO" id="GO:0051301">
    <property type="term" value="P:cell division"/>
    <property type="evidence" value="ECO:0007669"/>
    <property type="project" value="UniProtKB-KW"/>
</dbReference>
<dbReference type="GO" id="GO:1990758">
    <property type="term" value="P:mitotic sister chromatid biorientation"/>
    <property type="evidence" value="ECO:0000250"/>
    <property type="project" value="UniProtKB"/>
</dbReference>
<dbReference type="GO" id="GO:1990976">
    <property type="term" value="P:protein transport along microtubule to mitotic spindle pole body"/>
    <property type="evidence" value="ECO:0000250"/>
    <property type="project" value="UniProtKB"/>
</dbReference>
<dbReference type="InterPro" id="IPR013251">
    <property type="entry name" value="DASH_Spc19"/>
</dbReference>
<dbReference type="PANTHER" id="PTHR28262">
    <property type="entry name" value="DASH COMPLEX SUBUNIT SPC19"/>
    <property type="match status" value="1"/>
</dbReference>
<dbReference type="PANTHER" id="PTHR28262:SF1">
    <property type="entry name" value="DASH COMPLEX SUBUNIT SPC19"/>
    <property type="match status" value="1"/>
</dbReference>
<dbReference type="Pfam" id="PF08287">
    <property type="entry name" value="DASH_Spc19"/>
    <property type="match status" value="1"/>
</dbReference>
<proteinExistence type="inferred from homology"/>
<protein>
    <recommendedName>
        <fullName>DASH complex subunit SPC19</fullName>
    </recommendedName>
    <alternativeName>
        <fullName>Outer kinetochore protein SPC19</fullName>
    </alternativeName>
</protein>
<gene>
    <name type="primary">SPC19</name>
    <name type="ordered locus">YALI0F27335g</name>
</gene>
<comment type="function">
    <text evidence="1">Component of the DASH complex that connects microtubules with kinetochores and couples microtubule depolymerisation to chromosome movement; it is involved in retrieving kinetochores to the spindle poles before their re-orientation on the spindle in early mitosis and allows microtubule depolymerization to pull chromosomes apart and resist detachment during anaphase. Kinetochores, consisting of a centromere-associated inner segment and a microtubule-contacting outer segment, play a crucial role in chromosome segregation by mediating the physical connection between centromeric DNA and microtubules. Kinetochores also serve as an input point for the spindle assembly checkpoint, which delays anaphase until all chromosomes have bioriented on the mitotic spindle.</text>
</comment>
<comment type="subunit">
    <text evidence="1 2">Component of the DASH complex consisting of ASK1, DAD1, DAD2, DAD3, DAD4, DAM1, DUO1, HSK3, SPC19 and SPC34, with a stoichiometry of one copy of each subunit per complex. Multiple DASH complexes oligomerize to form a ring that encircles spindle microtubules and organizes the rod-like NDC80 complexes of the outer kinetochore. DASH complex oligomerization strengthens microtubule attachments (By similarity). On cytoplasmic microtubules, DASH complexes appear to form patches instead of rings (By similarity).</text>
</comment>
<comment type="subcellular location">
    <subcellularLocation>
        <location evidence="1">Nucleus</location>
    </subcellularLocation>
    <subcellularLocation>
        <location evidence="1">Cytoplasm</location>
        <location evidence="1">Cytoskeleton</location>
        <location evidence="1">Spindle</location>
    </subcellularLocation>
    <subcellularLocation>
        <location evidence="1">Chromosome</location>
        <location evidence="1">Centromere</location>
        <location evidence="1">Kinetochore</location>
    </subcellularLocation>
</comment>
<comment type="similarity">
    <text evidence="4">Belongs to the DASH complex SPC19 family.</text>
</comment>
<keyword id="KW-0131">Cell cycle</keyword>
<keyword id="KW-0132">Cell division</keyword>
<keyword id="KW-0137">Centromere</keyword>
<keyword id="KW-0158">Chromosome</keyword>
<keyword id="KW-0159">Chromosome partition</keyword>
<keyword id="KW-0175">Coiled coil</keyword>
<keyword id="KW-0963">Cytoplasm</keyword>
<keyword id="KW-0206">Cytoskeleton</keyword>
<keyword id="KW-0995">Kinetochore</keyword>
<keyword id="KW-0493">Microtubule</keyword>
<keyword id="KW-0498">Mitosis</keyword>
<keyword id="KW-0539">Nucleus</keyword>
<keyword id="KW-1185">Reference proteome</keyword>
<name>SPC19_YARLI</name>
<organism>
    <name type="scientific">Yarrowia lipolytica (strain CLIB 122 / E 150)</name>
    <name type="common">Yeast</name>
    <name type="synonym">Candida lipolytica</name>
    <dbReference type="NCBI Taxonomy" id="284591"/>
    <lineage>
        <taxon>Eukaryota</taxon>
        <taxon>Fungi</taxon>
        <taxon>Dikarya</taxon>
        <taxon>Ascomycota</taxon>
        <taxon>Saccharomycotina</taxon>
        <taxon>Dipodascomycetes</taxon>
        <taxon>Dipodascales</taxon>
        <taxon>Dipodascales incertae sedis</taxon>
        <taxon>Yarrowia</taxon>
    </lineage>
</organism>